<keyword id="KW-0030">Aminoacyl-tRNA synthetase</keyword>
<keyword id="KW-0067">ATP-binding</keyword>
<keyword id="KW-0175">Coiled coil</keyword>
<keyword id="KW-0963">Cytoplasm</keyword>
<keyword id="KW-0436">Ligase</keyword>
<keyword id="KW-0547">Nucleotide-binding</keyword>
<keyword id="KW-0648">Protein biosynthesis</keyword>
<gene>
    <name evidence="1" type="primary">valS</name>
    <name type="ordered locus">str0477</name>
</gene>
<proteinExistence type="inferred from homology"/>
<comment type="function">
    <text evidence="1">Catalyzes the attachment of valine to tRNA(Val). As ValRS can inadvertently accommodate and process structurally similar amino acids such as threonine, to avoid such errors, it has a 'posttransfer' editing activity that hydrolyzes mischarged Thr-tRNA(Val) in a tRNA-dependent manner.</text>
</comment>
<comment type="catalytic activity">
    <reaction evidence="1">
        <text>tRNA(Val) + L-valine + ATP = L-valyl-tRNA(Val) + AMP + diphosphate</text>
        <dbReference type="Rhea" id="RHEA:10704"/>
        <dbReference type="Rhea" id="RHEA-COMP:9672"/>
        <dbReference type="Rhea" id="RHEA-COMP:9708"/>
        <dbReference type="ChEBI" id="CHEBI:30616"/>
        <dbReference type="ChEBI" id="CHEBI:33019"/>
        <dbReference type="ChEBI" id="CHEBI:57762"/>
        <dbReference type="ChEBI" id="CHEBI:78442"/>
        <dbReference type="ChEBI" id="CHEBI:78537"/>
        <dbReference type="ChEBI" id="CHEBI:456215"/>
        <dbReference type="EC" id="6.1.1.9"/>
    </reaction>
</comment>
<comment type="subunit">
    <text evidence="1">Monomer.</text>
</comment>
<comment type="subcellular location">
    <subcellularLocation>
        <location evidence="1">Cytoplasm</location>
    </subcellularLocation>
</comment>
<comment type="domain">
    <text evidence="1">ValRS has two distinct active sites: one for aminoacylation and one for editing. The misactivated threonine is translocated from the active site to the editing site.</text>
</comment>
<comment type="domain">
    <text evidence="1">The C-terminal coiled-coil domain is crucial for aminoacylation activity.</text>
</comment>
<comment type="similarity">
    <text evidence="1">Belongs to the class-I aminoacyl-tRNA synthetase family. ValS type 1 subfamily.</text>
</comment>
<comment type="sequence caution" evidence="2">
    <conflict type="erroneous initiation">
        <sequence resource="EMBL-CDS" id="AAV62076"/>
    </conflict>
</comment>
<reference key="1">
    <citation type="journal article" date="2004" name="Nat. Biotechnol.">
        <title>Complete sequence and comparative genome analysis of the dairy bacterium Streptococcus thermophilus.</title>
        <authorList>
            <person name="Bolotin A."/>
            <person name="Quinquis B."/>
            <person name="Renault P."/>
            <person name="Sorokin A."/>
            <person name="Ehrlich S.D."/>
            <person name="Kulakauskas S."/>
            <person name="Lapidus A."/>
            <person name="Goltsman E."/>
            <person name="Mazur M."/>
            <person name="Pusch G.D."/>
            <person name="Fonstein M."/>
            <person name="Overbeek R."/>
            <person name="Kyprides N."/>
            <person name="Purnelle B."/>
            <person name="Prozzi D."/>
            <person name="Ngui K."/>
            <person name="Masuy D."/>
            <person name="Hancy F."/>
            <person name="Burteau S."/>
            <person name="Boutry M."/>
            <person name="Delcour J."/>
            <person name="Goffeau A."/>
            <person name="Hols P."/>
        </authorList>
    </citation>
    <scope>NUCLEOTIDE SEQUENCE [LARGE SCALE GENOMIC DNA]</scope>
    <source>
        <strain>CNRZ 1066</strain>
    </source>
</reference>
<sequence>MSKELSPKYNPAEVEAGRYQKWLDEDVFKPSGDKKAKPYSIVIPPPNVTGKLHLGHAWDTTLQDIIIRQKRMQGFDTLWLPGMDHAGIATQAKVEARLAESGISRYDLGREKFLDKVWEWKDEYAATIKEQWGKMGLSVDYSRERFTLDEGLSKAVRKVFVELYKKGWIYRGEFIINWDPKARTALSDIEVIHKDVEGAFYHMNYMLEDGSRALEVATTRPETMFGDTAVAVNPNDDRYKDLIGKNVILPILNKPIPIVGDEHADPEFGTGVVKITPAHDPNDFLVGQRHNLPQVNVMNDDGTMNELAGEFNGMDRFEARKAVVKKLEEIGALVEIEKMTHSVGHSERTGVPVEPRLSTQWFVKMDQLAKNAIANQDTDDKVDFYPPRFNDTFLQWMENVHDWVISRQLWWGHQIPAWYNAEGEIYVGEEAPEGDGWKQDEDVLDTWFSSALWPFSTMGWPDVDSEDFKRYFPTSTLVTGYDIIFFWVSRMIFQSLEFTGRQPFKNVLIHGLIRDEQGRKMSKSLGNGIDPMDVIEKYGADALRWFLSNGSAPGQDVRFSYEKMDASWNFINKIWNISRYILMNNEGLTLDVARENVAKVAAGQAGNVTDRWILHNLNETIGKVTENFDKFEFGVAGHILYNFIWDEFADWYVELTKEVLYSDNEDEKVITRSVLLYTLDQILRLLHPIMPFVTEEIFGQISEGSIVTAEYPVVCPEFENEEAAAGVEALKDVIRSVRNSRAEVNVAPSKPITILIKTSDSKLDAFFNDNINYIKRFTNPEHLEIAADVEVPDLVMSSIITGAEIYLPLADLLNVEEELARLEKELAKWQKELDMVGKKLSNERFVANAKPEVVQKERDKQKDYQAKYDAIVVRIDEMKKLVK</sequence>
<protein>
    <recommendedName>
        <fullName evidence="1">Valine--tRNA ligase</fullName>
        <ecNumber evidence="1">6.1.1.9</ecNumber>
    </recommendedName>
    <alternativeName>
        <fullName evidence="1">Valyl-tRNA synthetase</fullName>
        <shortName evidence="1">ValRS</shortName>
    </alternativeName>
</protein>
<organism>
    <name type="scientific">Streptococcus thermophilus (strain CNRZ 1066)</name>
    <dbReference type="NCBI Taxonomy" id="299768"/>
    <lineage>
        <taxon>Bacteria</taxon>
        <taxon>Bacillati</taxon>
        <taxon>Bacillota</taxon>
        <taxon>Bacilli</taxon>
        <taxon>Lactobacillales</taxon>
        <taxon>Streptococcaceae</taxon>
        <taxon>Streptococcus</taxon>
    </lineage>
</organism>
<dbReference type="EC" id="6.1.1.9" evidence="1"/>
<dbReference type="EMBL" id="CP000024">
    <property type="protein sequence ID" value="AAV62076.1"/>
    <property type="status" value="ALT_INIT"/>
    <property type="molecule type" value="Genomic_DNA"/>
</dbReference>
<dbReference type="RefSeq" id="WP_011226933.1">
    <property type="nucleotide sequence ID" value="NC_006449.1"/>
</dbReference>
<dbReference type="SMR" id="Q5M111"/>
<dbReference type="KEGG" id="stc:str0477"/>
<dbReference type="HOGENOM" id="CLU_001493_0_2_9"/>
<dbReference type="GO" id="GO:0005829">
    <property type="term" value="C:cytosol"/>
    <property type="evidence" value="ECO:0007669"/>
    <property type="project" value="TreeGrafter"/>
</dbReference>
<dbReference type="GO" id="GO:0002161">
    <property type="term" value="F:aminoacyl-tRNA deacylase activity"/>
    <property type="evidence" value="ECO:0007669"/>
    <property type="project" value="InterPro"/>
</dbReference>
<dbReference type="GO" id="GO:0005524">
    <property type="term" value="F:ATP binding"/>
    <property type="evidence" value="ECO:0007669"/>
    <property type="project" value="UniProtKB-UniRule"/>
</dbReference>
<dbReference type="GO" id="GO:0004832">
    <property type="term" value="F:valine-tRNA ligase activity"/>
    <property type="evidence" value="ECO:0007669"/>
    <property type="project" value="UniProtKB-UniRule"/>
</dbReference>
<dbReference type="GO" id="GO:0006438">
    <property type="term" value="P:valyl-tRNA aminoacylation"/>
    <property type="evidence" value="ECO:0007669"/>
    <property type="project" value="UniProtKB-UniRule"/>
</dbReference>
<dbReference type="CDD" id="cd07962">
    <property type="entry name" value="Anticodon_Ia_Val"/>
    <property type="match status" value="1"/>
</dbReference>
<dbReference type="CDD" id="cd00817">
    <property type="entry name" value="ValRS_core"/>
    <property type="match status" value="1"/>
</dbReference>
<dbReference type="FunFam" id="1.10.287.380:FF:000001">
    <property type="entry name" value="Valine--tRNA ligase"/>
    <property type="match status" value="1"/>
</dbReference>
<dbReference type="FunFam" id="1.10.730.10:FF:000014">
    <property type="entry name" value="Valine--tRNA ligase"/>
    <property type="match status" value="1"/>
</dbReference>
<dbReference type="FunFam" id="3.40.50.620:FF:000032">
    <property type="entry name" value="Valine--tRNA ligase"/>
    <property type="match status" value="1"/>
</dbReference>
<dbReference type="FunFam" id="3.40.50.620:FF:000098">
    <property type="entry name" value="Valine--tRNA ligase"/>
    <property type="match status" value="1"/>
</dbReference>
<dbReference type="FunFam" id="3.90.740.10:FF:000005">
    <property type="entry name" value="Valine--tRNA ligase, mitochondrial"/>
    <property type="match status" value="1"/>
</dbReference>
<dbReference type="Gene3D" id="3.40.50.620">
    <property type="entry name" value="HUPs"/>
    <property type="match status" value="3"/>
</dbReference>
<dbReference type="Gene3D" id="1.10.730.10">
    <property type="entry name" value="Isoleucyl-tRNA Synthetase, Domain 1"/>
    <property type="match status" value="1"/>
</dbReference>
<dbReference type="Gene3D" id="1.10.287.380">
    <property type="entry name" value="Valyl-tRNA synthetase, C-terminal domain"/>
    <property type="match status" value="1"/>
</dbReference>
<dbReference type="Gene3D" id="3.90.740.10">
    <property type="entry name" value="Valyl/Leucyl/Isoleucyl-tRNA synthetase, editing domain"/>
    <property type="match status" value="1"/>
</dbReference>
<dbReference type="HAMAP" id="MF_02004">
    <property type="entry name" value="Val_tRNA_synth_type1"/>
    <property type="match status" value="1"/>
</dbReference>
<dbReference type="InterPro" id="IPR001412">
    <property type="entry name" value="aa-tRNA-synth_I_CS"/>
</dbReference>
<dbReference type="InterPro" id="IPR002300">
    <property type="entry name" value="aa-tRNA-synth_Ia"/>
</dbReference>
<dbReference type="InterPro" id="IPR033705">
    <property type="entry name" value="Anticodon_Ia_Val"/>
</dbReference>
<dbReference type="InterPro" id="IPR013155">
    <property type="entry name" value="M/V/L/I-tRNA-synth_anticd-bd"/>
</dbReference>
<dbReference type="InterPro" id="IPR014729">
    <property type="entry name" value="Rossmann-like_a/b/a_fold"/>
</dbReference>
<dbReference type="InterPro" id="IPR010978">
    <property type="entry name" value="tRNA-bd_arm"/>
</dbReference>
<dbReference type="InterPro" id="IPR009080">
    <property type="entry name" value="tRNAsynth_Ia_anticodon-bd"/>
</dbReference>
<dbReference type="InterPro" id="IPR037118">
    <property type="entry name" value="Val-tRNA_synth_C_sf"/>
</dbReference>
<dbReference type="InterPro" id="IPR019499">
    <property type="entry name" value="Val-tRNA_synth_tRNA-bd"/>
</dbReference>
<dbReference type="InterPro" id="IPR009008">
    <property type="entry name" value="Val/Leu/Ile-tRNA-synth_edit"/>
</dbReference>
<dbReference type="InterPro" id="IPR002303">
    <property type="entry name" value="Valyl-tRNA_ligase"/>
</dbReference>
<dbReference type="NCBIfam" id="NF004349">
    <property type="entry name" value="PRK05729.1"/>
    <property type="match status" value="1"/>
</dbReference>
<dbReference type="NCBIfam" id="TIGR00422">
    <property type="entry name" value="valS"/>
    <property type="match status" value="1"/>
</dbReference>
<dbReference type="PANTHER" id="PTHR11946:SF93">
    <property type="entry name" value="VALINE--TRNA LIGASE, CHLOROPLASTIC_MITOCHONDRIAL 2"/>
    <property type="match status" value="1"/>
</dbReference>
<dbReference type="PANTHER" id="PTHR11946">
    <property type="entry name" value="VALYL-TRNA SYNTHETASES"/>
    <property type="match status" value="1"/>
</dbReference>
<dbReference type="Pfam" id="PF08264">
    <property type="entry name" value="Anticodon_1"/>
    <property type="match status" value="1"/>
</dbReference>
<dbReference type="Pfam" id="PF00133">
    <property type="entry name" value="tRNA-synt_1"/>
    <property type="match status" value="2"/>
</dbReference>
<dbReference type="Pfam" id="PF10458">
    <property type="entry name" value="Val_tRNA-synt_C"/>
    <property type="match status" value="1"/>
</dbReference>
<dbReference type="PRINTS" id="PR00986">
    <property type="entry name" value="TRNASYNTHVAL"/>
</dbReference>
<dbReference type="SUPFAM" id="SSF47323">
    <property type="entry name" value="Anticodon-binding domain of a subclass of class I aminoacyl-tRNA synthetases"/>
    <property type="match status" value="1"/>
</dbReference>
<dbReference type="SUPFAM" id="SSF52374">
    <property type="entry name" value="Nucleotidylyl transferase"/>
    <property type="match status" value="1"/>
</dbReference>
<dbReference type="SUPFAM" id="SSF46589">
    <property type="entry name" value="tRNA-binding arm"/>
    <property type="match status" value="1"/>
</dbReference>
<dbReference type="SUPFAM" id="SSF50677">
    <property type="entry name" value="ValRS/IleRS/LeuRS editing domain"/>
    <property type="match status" value="1"/>
</dbReference>
<dbReference type="PROSITE" id="PS00178">
    <property type="entry name" value="AA_TRNA_LIGASE_I"/>
    <property type="match status" value="1"/>
</dbReference>
<feature type="chain" id="PRO_0000224582" description="Valine--tRNA ligase">
    <location>
        <begin position="1"/>
        <end position="883"/>
    </location>
</feature>
<feature type="coiled-coil region" evidence="1">
    <location>
        <begin position="809"/>
        <end position="844"/>
    </location>
</feature>
<feature type="short sequence motif" description="'HIGH' region">
    <location>
        <begin position="46"/>
        <end position="56"/>
    </location>
</feature>
<feature type="short sequence motif" description="'KMSKS' region">
    <location>
        <begin position="520"/>
        <end position="524"/>
    </location>
</feature>
<feature type="binding site" evidence="1">
    <location>
        <position position="523"/>
    </location>
    <ligand>
        <name>ATP</name>
        <dbReference type="ChEBI" id="CHEBI:30616"/>
    </ligand>
</feature>
<name>SYV_STRT1</name>
<accession>Q5M111</accession>
<evidence type="ECO:0000255" key="1">
    <source>
        <dbReference type="HAMAP-Rule" id="MF_02004"/>
    </source>
</evidence>
<evidence type="ECO:0000305" key="2"/>